<reference key="1">
    <citation type="journal article" date="2006" name="PLoS Biol.">
        <title>The genome of deep-sea vent chemolithoautotroph Thiomicrospira crunogena XCL-2.</title>
        <authorList>
            <person name="Scott K.M."/>
            <person name="Sievert S.M."/>
            <person name="Abril F.N."/>
            <person name="Ball L.A."/>
            <person name="Barrett C.J."/>
            <person name="Blake R.A."/>
            <person name="Boller A.J."/>
            <person name="Chain P.S.G."/>
            <person name="Clark J.A."/>
            <person name="Davis C.R."/>
            <person name="Detter C."/>
            <person name="Do K.F."/>
            <person name="Dobrinski K.P."/>
            <person name="Faza B.I."/>
            <person name="Fitzpatrick K.A."/>
            <person name="Freyermuth S.K."/>
            <person name="Harmer T.L."/>
            <person name="Hauser L.J."/>
            <person name="Huegler M."/>
            <person name="Kerfeld C.A."/>
            <person name="Klotz M.G."/>
            <person name="Kong W.W."/>
            <person name="Land M."/>
            <person name="Lapidus A."/>
            <person name="Larimer F.W."/>
            <person name="Longo D.L."/>
            <person name="Lucas S."/>
            <person name="Malfatti S.A."/>
            <person name="Massey S.E."/>
            <person name="Martin D.D."/>
            <person name="McCuddin Z."/>
            <person name="Meyer F."/>
            <person name="Moore J.L."/>
            <person name="Ocampo L.H. Jr."/>
            <person name="Paul J.H."/>
            <person name="Paulsen I.T."/>
            <person name="Reep D.K."/>
            <person name="Ren Q."/>
            <person name="Ross R.L."/>
            <person name="Sato P.Y."/>
            <person name="Thomas P."/>
            <person name="Tinkham L.E."/>
            <person name="Zeruth G.T."/>
        </authorList>
    </citation>
    <scope>NUCLEOTIDE SEQUENCE [LARGE SCALE GENOMIC DNA]</scope>
    <source>
        <strain>DSM 25203 / XCL-2</strain>
    </source>
</reference>
<reference key="2">
    <citation type="journal article" date="2017" name="J. Bacteriol.">
        <title>Proteomic and Mutant Analysis of the CO2 Concentrating Mechanism of Hydrothermal Vent Chemolithoautotroph Thiomicrospira crunogena.</title>
        <authorList>
            <consortium name="USF MCB4404L"/>
            <person name="Mangiapia M."/>
            <person name="Brown T.W."/>
            <person name="Chaput D."/>
            <person name="Haller E."/>
            <person name="Harmer T.L."/>
            <person name="Hashemy Z."/>
            <person name="Keeley R."/>
            <person name="Leonard J."/>
            <person name="Mancera P."/>
            <person name="Nicholson D."/>
            <person name="Stevens S."/>
            <person name="Wanjugi P."/>
            <person name="Zabinski T."/>
            <person name="Pan C."/>
            <person name="Scott K.M."/>
        </authorList>
    </citation>
    <scope>SUBCELLULAR LOCATION</scope>
    <source>
        <strain>DSM 25203 / XCL-2</strain>
    </source>
</reference>
<keyword id="KW-1283">Bacterial microcompartment</keyword>
<keyword id="KW-0120">Carbon dioxide fixation</keyword>
<keyword id="KW-1282">Carboxysome</keyword>
<proteinExistence type="inferred from homology"/>
<comment type="function">
    <text evidence="1">One of shell proteins of the carboxysome, a polyhedral inclusion where RuBisCO (ribulose bisphosphate carboxylase, ccbL-ccbS) is sequestered. Assembles into hexamers which make sheets that form the facets of the polyhedral carboxysome. The shell probably limits the diffusion of CO(2) into and out of the carboxysome.</text>
</comment>
<comment type="subunit">
    <text evidence="1">Homohexamer with a small central pore.</text>
</comment>
<comment type="subcellular location">
    <subcellularLocation>
        <location evidence="5">Carboxysome</location>
    </subcellularLocation>
    <text evidence="4">This bacterium makes alpha-type carboxysomes.</text>
</comment>
<comment type="domain">
    <text evidence="1">The tight homohexamer forms a small pore which is positively charged.</text>
</comment>
<comment type="similarity">
    <text evidence="4">Belongs to the bacterial microcompartments protein family. CsoS1 subfamily.</text>
</comment>
<evidence type="ECO:0000250" key="1">
    <source>
        <dbReference type="UniProtKB" id="P45689"/>
    </source>
</evidence>
<evidence type="ECO:0000255" key="2">
    <source>
        <dbReference type="PROSITE-ProRule" id="PRU01278"/>
    </source>
</evidence>
<evidence type="ECO:0000303" key="3">
    <source>
    </source>
</evidence>
<evidence type="ECO:0000305" key="4"/>
<evidence type="ECO:0000305" key="5">
    <source>
    </source>
</evidence>
<evidence type="ECO:0000312" key="6">
    <source>
        <dbReference type="EMBL" id="ABB41441.1"/>
    </source>
</evidence>
<dbReference type="EMBL" id="CP000109">
    <property type="protein sequence ID" value="ABB41441.1"/>
    <property type="molecule type" value="Genomic_DNA"/>
</dbReference>
<dbReference type="SMR" id="Q31HD2"/>
<dbReference type="STRING" id="317025.Tcr_0845"/>
<dbReference type="KEGG" id="tcx:Tcr_0845"/>
<dbReference type="eggNOG" id="COG4577">
    <property type="taxonomic scope" value="Bacteria"/>
</dbReference>
<dbReference type="HOGENOM" id="CLU_064903_5_3_6"/>
<dbReference type="OrthoDB" id="9812608at2"/>
<dbReference type="GO" id="GO:0031470">
    <property type="term" value="C:carboxysome"/>
    <property type="evidence" value="ECO:0007669"/>
    <property type="project" value="UniProtKB-SubCell"/>
</dbReference>
<dbReference type="GO" id="GO:0015977">
    <property type="term" value="P:carbon fixation"/>
    <property type="evidence" value="ECO:0007669"/>
    <property type="project" value="UniProtKB-KW"/>
</dbReference>
<dbReference type="CDD" id="cd07058">
    <property type="entry name" value="BMC_CsoS1"/>
    <property type="match status" value="1"/>
</dbReference>
<dbReference type="Gene3D" id="3.30.70.1710">
    <property type="match status" value="1"/>
</dbReference>
<dbReference type="InterPro" id="IPR020808">
    <property type="entry name" value="Bact_microcomp_CS"/>
</dbReference>
<dbReference type="InterPro" id="IPR000249">
    <property type="entry name" value="BMC_dom"/>
</dbReference>
<dbReference type="InterPro" id="IPR050575">
    <property type="entry name" value="BMC_shell"/>
</dbReference>
<dbReference type="InterPro" id="IPR037233">
    <property type="entry name" value="CcmK-like_sf"/>
</dbReference>
<dbReference type="InterPro" id="IPR044872">
    <property type="entry name" value="CcmK/CsoS1_BMC"/>
</dbReference>
<dbReference type="PANTHER" id="PTHR33941:SF11">
    <property type="entry name" value="BACTERIAL MICROCOMPARTMENT SHELL PROTEIN PDUJ"/>
    <property type="match status" value="1"/>
</dbReference>
<dbReference type="PANTHER" id="PTHR33941">
    <property type="entry name" value="PROPANEDIOL UTILIZATION PROTEIN PDUA"/>
    <property type="match status" value="1"/>
</dbReference>
<dbReference type="Pfam" id="PF00936">
    <property type="entry name" value="BMC"/>
    <property type="match status" value="1"/>
</dbReference>
<dbReference type="SMART" id="SM00877">
    <property type="entry name" value="BMC"/>
    <property type="match status" value="1"/>
</dbReference>
<dbReference type="SUPFAM" id="SSF143414">
    <property type="entry name" value="CcmK-like"/>
    <property type="match status" value="1"/>
</dbReference>
<dbReference type="PROSITE" id="PS01139">
    <property type="entry name" value="BMC_1"/>
    <property type="match status" value="1"/>
</dbReference>
<dbReference type="PROSITE" id="PS51930">
    <property type="entry name" value="BMC_2"/>
    <property type="match status" value="1"/>
</dbReference>
<sequence>MSTEYGIALGMIETRGLVPAIEAADAMTKAAEVRLVSREFVGGGYVTVLVRGETGAVNAAVRAGADACERVGDGLVAAHIIARPHKEVEPVLTMEKK</sequence>
<organism>
    <name type="scientific">Hydrogenovibrio crunogenus (strain DSM 25203 / XCL-2)</name>
    <name type="common">Thiomicrospira crunogena</name>
    <dbReference type="NCBI Taxonomy" id="317025"/>
    <lineage>
        <taxon>Bacteria</taxon>
        <taxon>Pseudomonadati</taxon>
        <taxon>Pseudomonadota</taxon>
        <taxon>Gammaproteobacteria</taxon>
        <taxon>Thiotrichales</taxon>
        <taxon>Piscirickettsiaceae</taxon>
        <taxon>Hydrogenovibrio</taxon>
    </lineage>
</organism>
<name>CSOSB_HYDCU</name>
<protein>
    <recommendedName>
        <fullName evidence="3">Carboxysome shell protein CsoS1B</fullName>
    </recommendedName>
</protein>
<accession>Q31HD2</accession>
<feature type="chain" id="PRO_0000452073" description="Carboxysome shell protein CsoS1B">
    <location>
        <begin position="1"/>
        <end position="97"/>
    </location>
</feature>
<feature type="domain" description="BMC" evidence="2">
    <location>
        <begin position="8"/>
        <end position="93"/>
    </location>
</feature>
<gene>
    <name evidence="3" type="primary">csoS1B</name>
    <name evidence="6" type="ordered locus">Tcr_0845</name>
</gene>